<name>RK2_GRATL</name>
<dbReference type="EMBL" id="AY673996">
    <property type="protein sequence ID" value="AAT79679.1"/>
    <property type="molecule type" value="Genomic_DNA"/>
</dbReference>
<dbReference type="RefSeq" id="YP_063604.1">
    <property type="nucleotide sequence ID" value="NC_006137.1"/>
</dbReference>
<dbReference type="SMR" id="Q6B8V6"/>
<dbReference type="GeneID" id="2944089"/>
<dbReference type="GO" id="GO:0009507">
    <property type="term" value="C:chloroplast"/>
    <property type="evidence" value="ECO:0007669"/>
    <property type="project" value="UniProtKB-SubCell"/>
</dbReference>
<dbReference type="GO" id="GO:0005762">
    <property type="term" value="C:mitochondrial large ribosomal subunit"/>
    <property type="evidence" value="ECO:0007669"/>
    <property type="project" value="TreeGrafter"/>
</dbReference>
<dbReference type="GO" id="GO:0019843">
    <property type="term" value="F:rRNA binding"/>
    <property type="evidence" value="ECO:0007669"/>
    <property type="project" value="UniProtKB-UniRule"/>
</dbReference>
<dbReference type="GO" id="GO:0003735">
    <property type="term" value="F:structural constituent of ribosome"/>
    <property type="evidence" value="ECO:0007669"/>
    <property type="project" value="InterPro"/>
</dbReference>
<dbReference type="GO" id="GO:0016740">
    <property type="term" value="F:transferase activity"/>
    <property type="evidence" value="ECO:0007669"/>
    <property type="project" value="InterPro"/>
</dbReference>
<dbReference type="GO" id="GO:0032543">
    <property type="term" value="P:mitochondrial translation"/>
    <property type="evidence" value="ECO:0007669"/>
    <property type="project" value="TreeGrafter"/>
</dbReference>
<dbReference type="FunFam" id="2.30.30.30:FF:000001">
    <property type="entry name" value="50S ribosomal protein L2"/>
    <property type="match status" value="1"/>
</dbReference>
<dbReference type="FunFam" id="2.40.50.140:FF:000003">
    <property type="entry name" value="50S ribosomal protein L2"/>
    <property type="match status" value="1"/>
</dbReference>
<dbReference type="FunFam" id="4.10.950.10:FF:000001">
    <property type="entry name" value="50S ribosomal protein L2"/>
    <property type="match status" value="1"/>
</dbReference>
<dbReference type="Gene3D" id="2.30.30.30">
    <property type="match status" value="1"/>
</dbReference>
<dbReference type="Gene3D" id="2.40.50.140">
    <property type="entry name" value="Nucleic acid-binding proteins"/>
    <property type="match status" value="1"/>
</dbReference>
<dbReference type="Gene3D" id="4.10.950.10">
    <property type="entry name" value="Ribosomal protein L2, domain 3"/>
    <property type="match status" value="1"/>
</dbReference>
<dbReference type="HAMAP" id="MF_01320_B">
    <property type="entry name" value="Ribosomal_uL2_B"/>
    <property type="match status" value="1"/>
</dbReference>
<dbReference type="InterPro" id="IPR012340">
    <property type="entry name" value="NA-bd_OB-fold"/>
</dbReference>
<dbReference type="InterPro" id="IPR014722">
    <property type="entry name" value="Rib_uL2_dom2"/>
</dbReference>
<dbReference type="InterPro" id="IPR002171">
    <property type="entry name" value="Ribosomal_uL2"/>
</dbReference>
<dbReference type="InterPro" id="IPR005880">
    <property type="entry name" value="Ribosomal_uL2_bac/org-type"/>
</dbReference>
<dbReference type="InterPro" id="IPR022669">
    <property type="entry name" value="Ribosomal_uL2_C"/>
</dbReference>
<dbReference type="InterPro" id="IPR022671">
    <property type="entry name" value="Ribosomal_uL2_CS"/>
</dbReference>
<dbReference type="InterPro" id="IPR014726">
    <property type="entry name" value="Ribosomal_uL2_dom3"/>
</dbReference>
<dbReference type="InterPro" id="IPR022666">
    <property type="entry name" value="Ribosomal_uL2_RNA-bd_dom"/>
</dbReference>
<dbReference type="InterPro" id="IPR008991">
    <property type="entry name" value="Translation_prot_SH3-like_sf"/>
</dbReference>
<dbReference type="NCBIfam" id="TIGR01171">
    <property type="entry name" value="rplB_bact"/>
    <property type="match status" value="1"/>
</dbReference>
<dbReference type="PANTHER" id="PTHR13691:SF5">
    <property type="entry name" value="LARGE RIBOSOMAL SUBUNIT PROTEIN UL2M"/>
    <property type="match status" value="1"/>
</dbReference>
<dbReference type="PANTHER" id="PTHR13691">
    <property type="entry name" value="RIBOSOMAL PROTEIN L2"/>
    <property type="match status" value="1"/>
</dbReference>
<dbReference type="Pfam" id="PF00181">
    <property type="entry name" value="Ribosomal_L2"/>
    <property type="match status" value="1"/>
</dbReference>
<dbReference type="Pfam" id="PF03947">
    <property type="entry name" value="Ribosomal_L2_C"/>
    <property type="match status" value="1"/>
</dbReference>
<dbReference type="PIRSF" id="PIRSF002158">
    <property type="entry name" value="Ribosomal_L2"/>
    <property type="match status" value="1"/>
</dbReference>
<dbReference type="SMART" id="SM01383">
    <property type="entry name" value="Ribosomal_L2"/>
    <property type="match status" value="1"/>
</dbReference>
<dbReference type="SMART" id="SM01382">
    <property type="entry name" value="Ribosomal_L2_C"/>
    <property type="match status" value="1"/>
</dbReference>
<dbReference type="SUPFAM" id="SSF50249">
    <property type="entry name" value="Nucleic acid-binding proteins"/>
    <property type="match status" value="1"/>
</dbReference>
<dbReference type="SUPFAM" id="SSF50104">
    <property type="entry name" value="Translation proteins SH3-like domain"/>
    <property type="match status" value="1"/>
</dbReference>
<dbReference type="PROSITE" id="PS00467">
    <property type="entry name" value="RIBOSOMAL_L2"/>
    <property type="match status" value="1"/>
</dbReference>
<proteinExistence type="inferred from homology"/>
<reference key="1">
    <citation type="journal article" date="2004" name="J. Mol. Evol.">
        <title>Comparative analysis of the complete plastid genome sequence of the red alga Gracilaria tenuistipitata var. liui provides insights into the evolution of rhodoplasts and their relationship to other plastids.</title>
        <authorList>
            <person name="Hagopian J.C."/>
            <person name="Reis M."/>
            <person name="Kitajima J.P."/>
            <person name="Bhattacharya D."/>
            <person name="de Oliveira M.C."/>
        </authorList>
    </citation>
    <scope>NUCLEOTIDE SEQUENCE [LARGE SCALE GENOMIC DNA]</scope>
</reference>
<keyword id="KW-0150">Chloroplast</keyword>
<keyword id="KW-0934">Plastid</keyword>
<keyword id="KW-0687">Ribonucleoprotein</keyword>
<keyword id="KW-0689">Ribosomal protein</keyword>
<comment type="subunit">
    <text evidence="1">Part of the 50S ribosomal subunit.</text>
</comment>
<comment type="subcellular location">
    <subcellularLocation>
        <location>Plastid</location>
        <location>Chloroplast</location>
    </subcellularLocation>
</comment>
<comment type="similarity">
    <text evidence="4">Belongs to the universal ribosomal protein uL2 family.</text>
</comment>
<evidence type="ECO:0000250" key="1"/>
<evidence type="ECO:0000255" key="2">
    <source>
        <dbReference type="HAMAP-Rule" id="MF_01320"/>
    </source>
</evidence>
<evidence type="ECO:0000256" key="3">
    <source>
        <dbReference type="SAM" id="MobiDB-lite"/>
    </source>
</evidence>
<evidence type="ECO:0000305" key="4"/>
<sequence>MAIRLYKAYTPGTRNRTISTFNEITNKKPEKTLIRKNHRRQGRNSRGIITSRHRGKGHKRLYRTIDFKRNKYDIKAKVVSIEYDPNRNARIALLHYSDGEKRYILHPRSLNIGETVISGIKASLEVGNSLPLNYIPLGTAVHNIELNPLKGGQIVRAAGTYAQIVAKEGAFVTLKLPSNEVRLIRKECFATIGQVGNIDASNINIGKAGRNRWLSKRPKVRGVVMNPIDHPHGGGEGRSPIGKPHPVTPWGKPALGRKTRKKPKYSNRYILRKRK</sequence>
<geneLocation type="chloroplast"/>
<accession>Q6B8V6</accession>
<organism>
    <name type="scientific">Gracilaria tenuistipitata var. liui</name>
    <name type="common">Red alga</name>
    <dbReference type="NCBI Taxonomy" id="285951"/>
    <lineage>
        <taxon>Eukaryota</taxon>
        <taxon>Rhodophyta</taxon>
        <taxon>Florideophyceae</taxon>
        <taxon>Rhodymeniophycidae</taxon>
        <taxon>Gracilariales</taxon>
        <taxon>Gracilariaceae</taxon>
        <taxon>Gracilaria</taxon>
        <taxon>Gracilaria tenuistipitata</taxon>
    </lineage>
</organism>
<protein>
    <recommendedName>
        <fullName evidence="2">Large ribosomal subunit protein uL2c</fullName>
    </recommendedName>
    <alternativeName>
        <fullName evidence="4">50S ribosomal protein L2, chloroplastic</fullName>
    </alternativeName>
</protein>
<gene>
    <name type="primary">rpl2</name>
    <name type="ordered locus">Grc000098</name>
</gene>
<feature type="chain" id="PRO_0000129676" description="Large ribosomal subunit protein uL2c">
    <location>
        <begin position="1"/>
        <end position="275"/>
    </location>
</feature>
<feature type="region of interest" description="Disordered" evidence="3">
    <location>
        <begin position="36"/>
        <end position="56"/>
    </location>
</feature>
<feature type="region of interest" description="Disordered" evidence="3">
    <location>
        <begin position="224"/>
        <end position="275"/>
    </location>
</feature>
<feature type="compositionally biased region" description="Basic residues" evidence="3">
    <location>
        <begin position="255"/>
        <end position="275"/>
    </location>
</feature>